<reference key="1">
    <citation type="journal article" date="1996" name="DNA Res.">
        <title>Sequence analysis of the genome of the unicellular cyanobacterium Synechocystis sp. strain PCC6803. II. Sequence determination of the entire genome and assignment of potential protein-coding regions.</title>
        <authorList>
            <person name="Kaneko T."/>
            <person name="Sato S."/>
            <person name="Kotani H."/>
            <person name="Tanaka A."/>
            <person name="Asamizu E."/>
            <person name="Nakamura Y."/>
            <person name="Miyajima N."/>
            <person name="Hirosawa M."/>
            <person name="Sugiura M."/>
            <person name="Sasamoto S."/>
            <person name="Kimura T."/>
            <person name="Hosouchi T."/>
            <person name="Matsuno A."/>
            <person name="Muraki A."/>
            <person name="Nakazaki N."/>
            <person name="Naruo K."/>
            <person name="Okumura S."/>
            <person name="Shimpo S."/>
            <person name="Takeuchi C."/>
            <person name="Wada T."/>
            <person name="Watanabe A."/>
            <person name="Yamada M."/>
            <person name="Yasuda M."/>
            <person name="Tabata S."/>
        </authorList>
    </citation>
    <scope>NUCLEOTIDE SEQUENCE [LARGE SCALE GENOMIC DNA]</scope>
    <source>
        <strain>ATCC 27184 / PCC 6803 / Kazusa</strain>
    </source>
</reference>
<proteinExistence type="inferred from homology"/>
<organism>
    <name type="scientific">Synechocystis sp. (strain ATCC 27184 / PCC 6803 / Kazusa)</name>
    <dbReference type="NCBI Taxonomy" id="1111708"/>
    <lineage>
        <taxon>Bacteria</taxon>
        <taxon>Bacillati</taxon>
        <taxon>Cyanobacteriota</taxon>
        <taxon>Cyanophyceae</taxon>
        <taxon>Synechococcales</taxon>
        <taxon>Merismopediaceae</taxon>
        <taxon>Synechocystis</taxon>
    </lineage>
</organism>
<dbReference type="EMBL" id="BA000022">
    <property type="protein sequence ID" value="BAA17513.1"/>
    <property type="molecule type" value="Genomic_DNA"/>
</dbReference>
<dbReference type="PIR" id="S77410">
    <property type="entry name" value="S77410"/>
</dbReference>
<dbReference type="SMR" id="P73473"/>
<dbReference type="STRING" id="1148.gene:10498378"/>
<dbReference type="PaxDb" id="1148-1652592"/>
<dbReference type="EnsemblBacteria" id="BAA17513">
    <property type="protein sequence ID" value="BAA17513"/>
    <property type="gene ID" value="BAA17513"/>
</dbReference>
<dbReference type="KEGG" id="syn:slr1228"/>
<dbReference type="eggNOG" id="COG4108">
    <property type="taxonomic scope" value="Bacteria"/>
</dbReference>
<dbReference type="InParanoid" id="P73473"/>
<dbReference type="PhylomeDB" id="P73473"/>
<dbReference type="Proteomes" id="UP000001425">
    <property type="component" value="Chromosome"/>
</dbReference>
<dbReference type="GO" id="GO:0005829">
    <property type="term" value="C:cytosol"/>
    <property type="evidence" value="ECO:0000318"/>
    <property type="project" value="GO_Central"/>
</dbReference>
<dbReference type="GO" id="GO:0005525">
    <property type="term" value="F:GTP binding"/>
    <property type="evidence" value="ECO:0007669"/>
    <property type="project" value="UniProtKB-UniRule"/>
</dbReference>
<dbReference type="GO" id="GO:0003924">
    <property type="term" value="F:GTPase activity"/>
    <property type="evidence" value="ECO:0007669"/>
    <property type="project" value="InterPro"/>
</dbReference>
<dbReference type="GO" id="GO:0016150">
    <property type="term" value="F:translation release factor activity, codon nonspecific"/>
    <property type="evidence" value="ECO:0000318"/>
    <property type="project" value="GO_Central"/>
</dbReference>
<dbReference type="GO" id="GO:0016149">
    <property type="term" value="F:translation release factor activity, codon specific"/>
    <property type="evidence" value="ECO:0007669"/>
    <property type="project" value="UniProtKB-UniRule"/>
</dbReference>
<dbReference type="GO" id="GO:0006449">
    <property type="term" value="P:regulation of translational termination"/>
    <property type="evidence" value="ECO:0007669"/>
    <property type="project" value="UniProtKB-UniRule"/>
</dbReference>
<dbReference type="GO" id="GO:0006415">
    <property type="term" value="P:translational termination"/>
    <property type="evidence" value="ECO:0000318"/>
    <property type="project" value="GO_Central"/>
</dbReference>
<dbReference type="CDD" id="cd04169">
    <property type="entry name" value="RF3"/>
    <property type="match status" value="1"/>
</dbReference>
<dbReference type="CDD" id="cd03689">
    <property type="entry name" value="RF3_II"/>
    <property type="match status" value="1"/>
</dbReference>
<dbReference type="FunFam" id="2.40.30.10:FF:000040">
    <property type="entry name" value="Peptide chain release factor 3"/>
    <property type="match status" value="1"/>
</dbReference>
<dbReference type="FunFam" id="3.30.70.3280:FF:000001">
    <property type="entry name" value="Peptide chain release factor 3"/>
    <property type="match status" value="1"/>
</dbReference>
<dbReference type="FunFam" id="3.40.50.300:FF:000542">
    <property type="entry name" value="Peptide chain release factor 3"/>
    <property type="match status" value="1"/>
</dbReference>
<dbReference type="Gene3D" id="3.40.50.300">
    <property type="entry name" value="P-loop containing nucleotide triphosphate hydrolases"/>
    <property type="match status" value="1"/>
</dbReference>
<dbReference type="Gene3D" id="3.30.70.3280">
    <property type="entry name" value="Peptide chain release factor 3, domain III"/>
    <property type="match status" value="1"/>
</dbReference>
<dbReference type="Gene3D" id="2.40.30.10">
    <property type="entry name" value="Translation factors"/>
    <property type="match status" value="1"/>
</dbReference>
<dbReference type="HAMAP" id="MF_00072">
    <property type="entry name" value="Rel_fac_3"/>
    <property type="match status" value="1"/>
</dbReference>
<dbReference type="InterPro" id="IPR053905">
    <property type="entry name" value="EF-G-like_DII"/>
</dbReference>
<dbReference type="InterPro" id="IPR035647">
    <property type="entry name" value="EFG_III/V"/>
</dbReference>
<dbReference type="InterPro" id="IPR031157">
    <property type="entry name" value="G_TR_CS"/>
</dbReference>
<dbReference type="InterPro" id="IPR027417">
    <property type="entry name" value="P-loop_NTPase"/>
</dbReference>
<dbReference type="InterPro" id="IPR004548">
    <property type="entry name" value="PrfC"/>
</dbReference>
<dbReference type="InterPro" id="IPR032090">
    <property type="entry name" value="RF3_C"/>
</dbReference>
<dbReference type="InterPro" id="IPR038467">
    <property type="entry name" value="RF3_dom_3_sf"/>
</dbReference>
<dbReference type="InterPro" id="IPR041732">
    <property type="entry name" value="RF3_GTP-bd"/>
</dbReference>
<dbReference type="InterPro" id="IPR005225">
    <property type="entry name" value="Small_GTP-bd"/>
</dbReference>
<dbReference type="InterPro" id="IPR000795">
    <property type="entry name" value="T_Tr_GTP-bd_dom"/>
</dbReference>
<dbReference type="InterPro" id="IPR009000">
    <property type="entry name" value="Transl_B-barrel_sf"/>
</dbReference>
<dbReference type="NCBIfam" id="TIGR00503">
    <property type="entry name" value="prfC"/>
    <property type="match status" value="1"/>
</dbReference>
<dbReference type="NCBIfam" id="NF001964">
    <property type="entry name" value="PRK00741.1"/>
    <property type="match status" value="1"/>
</dbReference>
<dbReference type="NCBIfam" id="TIGR00231">
    <property type="entry name" value="small_GTP"/>
    <property type="match status" value="1"/>
</dbReference>
<dbReference type="PANTHER" id="PTHR43556">
    <property type="entry name" value="PEPTIDE CHAIN RELEASE FACTOR RF3"/>
    <property type="match status" value="1"/>
</dbReference>
<dbReference type="PANTHER" id="PTHR43556:SF2">
    <property type="entry name" value="PEPTIDE CHAIN RELEASE FACTOR RF3"/>
    <property type="match status" value="1"/>
</dbReference>
<dbReference type="Pfam" id="PF22042">
    <property type="entry name" value="EF-G_D2"/>
    <property type="match status" value="1"/>
</dbReference>
<dbReference type="Pfam" id="PF00009">
    <property type="entry name" value="GTP_EFTU"/>
    <property type="match status" value="1"/>
</dbReference>
<dbReference type="Pfam" id="PF16658">
    <property type="entry name" value="RF3_C"/>
    <property type="match status" value="1"/>
</dbReference>
<dbReference type="PRINTS" id="PR00315">
    <property type="entry name" value="ELONGATNFCT"/>
</dbReference>
<dbReference type="SUPFAM" id="SSF54980">
    <property type="entry name" value="EF-G C-terminal domain-like"/>
    <property type="match status" value="1"/>
</dbReference>
<dbReference type="SUPFAM" id="SSF52540">
    <property type="entry name" value="P-loop containing nucleoside triphosphate hydrolases"/>
    <property type="match status" value="1"/>
</dbReference>
<dbReference type="SUPFAM" id="SSF50447">
    <property type="entry name" value="Translation proteins"/>
    <property type="match status" value="1"/>
</dbReference>
<dbReference type="PROSITE" id="PS00301">
    <property type="entry name" value="G_TR_1"/>
    <property type="match status" value="1"/>
</dbReference>
<dbReference type="PROSITE" id="PS51722">
    <property type="entry name" value="G_TR_2"/>
    <property type="match status" value="1"/>
</dbReference>
<evidence type="ECO:0000250" key="1"/>
<evidence type="ECO:0000305" key="2"/>
<sequence>MQTSPSSTAPCADKALDDLLKEVDRRRNFAIISHPDAGKTTLTEKLLLYGGAIQEAGAVKARRSQRSATSDWMAMEQQRGISITSTVLQFDYRGKILNLLDTPGHQDFSEDTYRTLAAADNAVMLIDAAKGLETQTRKLFEVCRLRHLPIFTFINKLDRPSLTPLELMDEIEQELGMNTYAVNYPIGTGDRFRGVYNRLTKTIHLFERTGTHGSKKAADQTMALDDPALESLLGSDVYAEFQDELELIEEAGAEFDLAAVHGGEMTPVFFGSAMNNFGVELFLQAFLQYAAKPEAHDSNRGTIEPTYEEFSGFVFKLQANMDPKHRDRIAFLRVCSGKFEKDMVVKHPRTGKTVRLSRPQKLFAQERESVDIAYAGDVIGLNNPGAFTIGDTVHTGEKIIYPPIPSFSPELFAYLRSTDPSQYKNFKKGVSELQEEGAVQILQSLDESKRDPILAAVGQLQFEVVQYRLQEEYGVETRLEPLGFSLARWVVEGWDALEKAGRLFNTVVVKDRWDAPVLLFKNQWNLEQVAGDCLDLKLSAIAIPPSL</sequence>
<protein>
    <recommendedName>
        <fullName>Peptide chain release factor 3</fullName>
        <shortName>RF-3</shortName>
    </recommendedName>
</protein>
<keyword id="KW-0963">Cytoplasm</keyword>
<keyword id="KW-0342">GTP-binding</keyword>
<keyword id="KW-0547">Nucleotide-binding</keyword>
<keyword id="KW-0648">Protein biosynthesis</keyword>
<keyword id="KW-1185">Reference proteome</keyword>
<gene>
    <name type="primary">prfC</name>
    <name type="ordered locus">slr1228</name>
</gene>
<feature type="chain" id="PRO_0000210978" description="Peptide chain release factor 3">
    <location>
        <begin position="1"/>
        <end position="547"/>
    </location>
</feature>
<feature type="domain" description="tr-type G">
    <location>
        <begin position="24"/>
        <end position="294"/>
    </location>
</feature>
<feature type="binding site" evidence="1">
    <location>
        <begin position="33"/>
        <end position="40"/>
    </location>
    <ligand>
        <name>GTP</name>
        <dbReference type="ChEBI" id="CHEBI:37565"/>
    </ligand>
</feature>
<feature type="binding site" evidence="1">
    <location>
        <begin position="101"/>
        <end position="105"/>
    </location>
    <ligand>
        <name>GTP</name>
        <dbReference type="ChEBI" id="CHEBI:37565"/>
    </ligand>
</feature>
<feature type="binding site" evidence="1">
    <location>
        <begin position="155"/>
        <end position="158"/>
    </location>
    <ligand>
        <name>GTP</name>
        <dbReference type="ChEBI" id="CHEBI:37565"/>
    </ligand>
</feature>
<name>RF3_SYNY3</name>
<comment type="function">
    <text evidence="1">Increases the formation of ribosomal termination complexes and stimulates activities of RF-1 and RF-2. It binds guanine nucleotides and has strong preference for UGA stop codons. It may interact directly with the ribosome. The stimulation of RF-1 and RF-2 is significantly reduced by GTP and GDP, but not by GMP (By similarity).</text>
</comment>
<comment type="subcellular location">
    <subcellularLocation>
        <location evidence="1">Cytoplasm</location>
    </subcellularLocation>
</comment>
<comment type="similarity">
    <text evidence="2">Belongs to the TRAFAC class translation factor GTPase superfamily. Classic translation factor GTPase family. PrfC subfamily.</text>
</comment>
<accession>P73473</accession>